<dbReference type="EC" id="2.5.1.3" evidence="1"/>
<dbReference type="EMBL" id="CP001407">
    <property type="protein sequence ID" value="ACO31086.1"/>
    <property type="molecule type" value="Genomic_DNA"/>
</dbReference>
<dbReference type="RefSeq" id="WP_000086991.1">
    <property type="nucleotide sequence ID" value="NZ_CP009318.1"/>
</dbReference>
<dbReference type="SMR" id="C1EVE6"/>
<dbReference type="KEGG" id="bcx:BCA_0455"/>
<dbReference type="PATRIC" id="fig|572264.18.peg.441"/>
<dbReference type="UniPathway" id="UPA00060">
    <property type="reaction ID" value="UER00141"/>
</dbReference>
<dbReference type="Proteomes" id="UP000002210">
    <property type="component" value="Chromosome"/>
</dbReference>
<dbReference type="GO" id="GO:0005737">
    <property type="term" value="C:cytoplasm"/>
    <property type="evidence" value="ECO:0007669"/>
    <property type="project" value="TreeGrafter"/>
</dbReference>
<dbReference type="GO" id="GO:0000287">
    <property type="term" value="F:magnesium ion binding"/>
    <property type="evidence" value="ECO:0007669"/>
    <property type="project" value="UniProtKB-UniRule"/>
</dbReference>
<dbReference type="GO" id="GO:0004789">
    <property type="term" value="F:thiamine-phosphate diphosphorylase activity"/>
    <property type="evidence" value="ECO:0007669"/>
    <property type="project" value="UniProtKB-UniRule"/>
</dbReference>
<dbReference type="GO" id="GO:0009228">
    <property type="term" value="P:thiamine biosynthetic process"/>
    <property type="evidence" value="ECO:0007669"/>
    <property type="project" value="UniProtKB-KW"/>
</dbReference>
<dbReference type="GO" id="GO:0009229">
    <property type="term" value="P:thiamine diphosphate biosynthetic process"/>
    <property type="evidence" value="ECO:0007669"/>
    <property type="project" value="UniProtKB-UniRule"/>
</dbReference>
<dbReference type="CDD" id="cd00564">
    <property type="entry name" value="TMP_TenI"/>
    <property type="match status" value="1"/>
</dbReference>
<dbReference type="FunFam" id="3.20.20.70:FF:000096">
    <property type="entry name" value="Thiamine-phosphate synthase"/>
    <property type="match status" value="1"/>
</dbReference>
<dbReference type="Gene3D" id="3.20.20.70">
    <property type="entry name" value="Aldolase class I"/>
    <property type="match status" value="1"/>
</dbReference>
<dbReference type="HAMAP" id="MF_00097">
    <property type="entry name" value="TMP_synthase"/>
    <property type="match status" value="1"/>
</dbReference>
<dbReference type="InterPro" id="IPR013785">
    <property type="entry name" value="Aldolase_TIM"/>
</dbReference>
<dbReference type="InterPro" id="IPR036206">
    <property type="entry name" value="ThiamineP_synth_sf"/>
</dbReference>
<dbReference type="InterPro" id="IPR022998">
    <property type="entry name" value="ThiamineP_synth_TenI"/>
</dbReference>
<dbReference type="InterPro" id="IPR034291">
    <property type="entry name" value="TMP_synthase"/>
</dbReference>
<dbReference type="NCBIfam" id="TIGR00693">
    <property type="entry name" value="thiE"/>
    <property type="match status" value="1"/>
</dbReference>
<dbReference type="PANTHER" id="PTHR20857">
    <property type="entry name" value="THIAMINE-PHOSPHATE PYROPHOSPHORYLASE"/>
    <property type="match status" value="1"/>
</dbReference>
<dbReference type="PANTHER" id="PTHR20857:SF15">
    <property type="entry name" value="THIAMINE-PHOSPHATE SYNTHASE"/>
    <property type="match status" value="1"/>
</dbReference>
<dbReference type="Pfam" id="PF02581">
    <property type="entry name" value="TMP-TENI"/>
    <property type="match status" value="1"/>
</dbReference>
<dbReference type="SUPFAM" id="SSF51391">
    <property type="entry name" value="Thiamin phosphate synthase"/>
    <property type="match status" value="1"/>
</dbReference>
<organism>
    <name type="scientific">Bacillus cereus (strain 03BB102)</name>
    <dbReference type="NCBI Taxonomy" id="572264"/>
    <lineage>
        <taxon>Bacteria</taxon>
        <taxon>Bacillati</taxon>
        <taxon>Bacillota</taxon>
        <taxon>Bacilli</taxon>
        <taxon>Bacillales</taxon>
        <taxon>Bacillaceae</taxon>
        <taxon>Bacillus</taxon>
        <taxon>Bacillus cereus group</taxon>
    </lineage>
</organism>
<name>THIE_BACC3</name>
<reference key="1">
    <citation type="submission" date="2009-02" db="EMBL/GenBank/DDBJ databases">
        <title>Genome sequence of Bacillus cereus 03BB102.</title>
        <authorList>
            <person name="Dodson R.J."/>
            <person name="Jackson P."/>
            <person name="Munk A.C."/>
            <person name="Brettin T."/>
            <person name="Bruce D."/>
            <person name="Detter C."/>
            <person name="Tapia R."/>
            <person name="Han C."/>
            <person name="Sutton G."/>
            <person name="Sims D."/>
        </authorList>
    </citation>
    <scope>NUCLEOTIDE SEQUENCE [LARGE SCALE GENOMIC DNA]</scope>
    <source>
        <strain>03BB102</strain>
    </source>
</reference>
<sequence>MSRISKEEMSKLLSVYFIMGSNNCTKDPLQVLREALEGGITIFQFREKGEGALTGEERICFAKELQAICKEYGVPFIVNDDVELALELDADGVHVGQDDEGITSVREKMGDKIVGVSTHTIEEARWAIENGADYLGVGPIFPTSTKKDTKAVQGTKGLAHFREQGITIPIVGIGGISIENTASVIEAGADGVSVISAISLAESSYESTKKLVEEVSRSL</sequence>
<comment type="function">
    <text evidence="1">Condenses 4-methyl-5-(beta-hydroxyethyl)thiazole monophosphate (THZ-P) and 2-methyl-4-amino-5-hydroxymethyl pyrimidine pyrophosphate (HMP-PP) to form thiamine monophosphate (TMP).</text>
</comment>
<comment type="catalytic activity">
    <reaction evidence="1">
        <text>2-[(2R,5Z)-2-carboxy-4-methylthiazol-5(2H)-ylidene]ethyl phosphate + 4-amino-2-methyl-5-(diphosphooxymethyl)pyrimidine + 2 H(+) = thiamine phosphate + CO2 + diphosphate</text>
        <dbReference type="Rhea" id="RHEA:47844"/>
        <dbReference type="ChEBI" id="CHEBI:15378"/>
        <dbReference type="ChEBI" id="CHEBI:16526"/>
        <dbReference type="ChEBI" id="CHEBI:33019"/>
        <dbReference type="ChEBI" id="CHEBI:37575"/>
        <dbReference type="ChEBI" id="CHEBI:57841"/>
        <dbReference type="ChEBI" id="CHEBI:62899"/>
        <dbReference type="EC" id="2.5.1.3"/>
    </reaction>
</comment>
<comment type="catalytic activity">
    <reaction evidence="1">
        <text>2-(2-carboxy-4-methylthiazol-5-yl)ethyl phosphate + 4-amino-2-methyl-5-(diphosphooxymethyl)pyrimidine + 2 H(+) = thiamine phosphate + CO2 + diphosphate</text>
        <dbReference type="Rhea" id="RHEA:47848"/>
        <dbReference type="ChEBI" id="CHEBI:15378"/>
        <dbReference type="ChEBI" id="CHEBI:16526"/>
        <dbReference type="ChEBI" id="CHEBI:33019"/>
        <dbReference type="ChEBI" id="CHEBI:37575"/>
        <dbReference type="ChEBI" id="CHEBI:57841"/>
        <dbReference type="ChEBI" id="CHEBI:62890"/>
        <dbReference type="EC" id="2.5.1.3"/>
    </reaction>
</comment>
<comment type="catalytic activity">
    <reaction evidence="1">
        <text>4-methyl-5-(2-phosphooxyethyl)-thiazole + 4-amino-2-methyl-5-(diphosphooxymethyl)pyrimidine + H(+) = thiamine phosphate + diphosphate</text>
        <dbReference type="Rhea" id="RHEA:22328"/>
        <dbReference type="ChEBI" id="CHEBI:15378"/>
        <dbReference type="ChEBI" id="CHEBI:33019"/>
        <dbReference type="ChEBI" id="CHEBI:37575"/>
        <dbReference type="ChEBI" id="CHEBI:57841"/>
        <dbReference type="ChEBI" id="CHEBI:58296"/>
        <dbReference type="EC" id="2.5.1.3"/>
    </reaction>
</comment>
<comment type="cofactor">
    <cofactor evidence="1">
        <name>Mg(2+)</name>
        <dbReference type="ChEBI" id="CHEBI:18420"/>
    </cofactor>
    <text evidence="1">Binds 1 Mg(2+) ion per subunit.</text>
</comment>
<comment type="pathway">
    <text evidence="1">Cofactor biosynthesis; thiamine diphosphate biosynthesis; thiamine phosphate from 4-amino-2-methyl-5-diphosphomethylpyrimidine and 4-methyl-5-(2-phosphoethyl)-thiazole: step 1/1.</text>
</comment>
<comment type="similarity">
    <text evidence="1">Belongs to the thiamine-phosphate synthase family.</text>
</comment>
<gene>
    <name evidence="1" type="primary">thiE</name>
    <name type="ordered locus">BCA_0455</name>
</gene>
<accession>C1EVE6</accession>
<evidence type="ECO:0000255" key="1">
    <source>
        <dbReference type="HAMAP-Rule" id="MF_00097"/>
    </source>
</evidence>
<protein>
    <recommendedName>
        <fullName evidence="1">Thiamine-phosphate synthase</fullName>
        <shortName evidence="1">TP synthase</shortName>
        <shortName evidence="1">TPS</shortName>
        <ecNumber evidence="1">2.5.1.3</ecNumber>
    </recommendedName>
    <alternativeName>
        <fullName evidence="1">Thiamine-phosphate pyrophosphorylase</fullName>
        <shortName evidence="1">TMP pyrophosphorylase</shortName>
        <shortName evidence="1">TMP-PPase</shortName>
    </alternativeName>
</protein>
<proteinExistence type="inferred from homology"/>
<keyword id="KW-0460">Magnesium</keyword>
<keyword id="KW-0479">Metal-binding</keyword>
<keyword id="KW-0784">Thiamine biosynthesis</keyword>
<keyword id="KW-0808">Transferase</keyword>
<feature type="chain" id="PRO_1000198073" description="Thiamine-phosphate synthase">
    <location>
        <begin position="1"/>
        <end position="219"/>
    </location>
</feature>
<feature type="binding site" evidence="1">
    <location>
        <begin position="44"/>
        <end position="48"/>
    </location>
    <ligand>
        <name>4-amino-2-methyl-5-(diphosphooxymethyl)pyrimidine</name>
        <dbReference type="ChEBI" id="CHEBI:57841"/>
    </ligand>
</feature>
<feature type="binding site" evidence="1">
    <location>
        <position position="79"/>
    </location>
    <ligand>
        <name>4-amino-2-methyl-5-(diphosphooxymethyl)pyrimidine</name>
        <dbReference type="ChEBI" id="CHEBI:57841"/>
    </ligand>
</feature>
<feature type="binding site" evidence="1">
    <location>
        <position position="80"/>
    </location>
    <ligand>
        <name>Mg(2+)</name>
        <dbReference type="ChEBI" id="CHEBI:18420"/>
    </ligand>
</feature>
<feature type="binding site" evidence="1">
    <location>
        <position position="99"/>
    </location>
    <ligand>
        <name>Mg(2+)</name>
        <dbReference type="ChEBI" id="CHEBI:18420"/>
    </ligand>
</feature>
<feature type="binding site" evidence="1">
    <location>
        <position position="117"/>
    </location>
    <ligand>
        <name>4-amino-2-methyl-5-(diphosphooxymethyl)pyrimidine</name>
        <dbReference type="ChEBI" id="CHEBI:57841"/>
    </ligand>
</feature>
<feature type="binding site" evidence="1">
    <location>
        <begin position="143"/>
        <end position="145"/>
    </location>
    <ligand>
        <name>2-[(2R,5Z)-2-carboxy-4-methylthiazol-5(2H)-ylidene]ethyl phosphate</name>
        <dbReference type="ChEBI" id="CHEBI:62899"/>
    </ligand>
</feature>
<feature type="binding site" evidence="1">
    <location>
        <position position="146"/>
    </location>
    <ligand>
        <name>4-amino-2-methyl-5-(diphosphooxymethyl)pyrimidine</name>
        <dbReference type="ChEBI" id="CHEBI:57841"/>
    </ligand>
</feature>
<feature type="binding site" evidence="1">
    <location>
        <position position="175"/>
    </location>
    <ligand>
        <name>2-[(2R,5Z)-2-carboxy-4-methylthiazol-5(2H)-ylidene]ethyl phosphate</name>
        <dbReference type="ChEBI" id="CHEBI:62899"/>
    </ligand>
</feature>
<feature type="binding site" evidence="1">
    <location>
        <begin position="195"/>
        <end position="196"/>
    </location>
    <ligand>
        <name>2-[(2R,5Z)-2-carboxy-4-methylthiazol-5(2H)-ylidene]ethyl phosphate</name>
        <dbReference type="ChEBI" id="CHEBI:62899"/>
    </ligand>
</feature>